<evidence type="ECO:0000255" key="1">
    <source>
        <dbReference type="HAMAP-Rule" id="MF_00013"/>
    </source>
</evidence>
<evidence type="ECO:0000255" key="2">
    <source>
        <dbReference type="PROSITE-ProRule" id="PRU01067"/>
    </source>
</evidence>
<name>LIPB_SHESH</name>
<dbReference type="EC" id="2.3.1.181" evidence="1"/>
<dbReference type="EMBL" id="CP000821">
    <property type="protein sequence ID" value="ABV38095.1"/>
    <property type="molecule type" value="Genomic_DNA"/>
</dbReference>
<dbReference type="RefSeq" id="WP_012143825.1">
    <property type="nucleotide sequence ID" value="NC_009831.1"/>
</dbReference>
<dbReference type="SMR" id="A8FZ22"/>
<dbReference type="STRING" id="425104.Ssed_3491"/>
<dbReference type="KEGG" id="sse:Ssed_3491"/>
<dbReference type="eggNOG" id="COG0321">
    <property type="taxonomic scope" value="Bacteria"/>
</dbReference>
<dbReference type="HOGENOM" id="CLU_035168_3_1_6"/>
<dbReference type="OrthoDB" id="9787061at2"/>
<dbReference type="UniPathway" id="UPA00538">
    <property type="reaction ID" value="UER00592"/>
</dbReference>
<dbReference type="Proteomes" id="UP000002015">
    <property type="component" value="Chromosome"/>
</dbReference>
<dbReference type="GO" id="GO:0005737">
    <property type="term" value="C:cytoplasm"/>
    <property type="evidence" value="ECO:0007669"/>
    <property type="project" value="UniProtKB-SubCell"/>
</dbReference>
<dbReference type="GO" id="GO:0033819">
    <property type="term" value="F:lipoyl(octanoyl) transferase activity"/>
    <property type="evidence" value="ECO:0007669"/>
    <property type="project" value="UniProtKB-EC"/>
</dbReference>
<dbReference type="GO" id="GO:0036211">
    <property type="term" value="P:protein modification process"/>
    <property type="evidence" value="ECO:0007669"/>
    <property type="project" value="InterPro"/>
</dbReference>
<dbReference type="CDD" id="cd16444">
    <property type="entry name" value="LipB"/>
    <property type="match status" value="1"/>
</dbReference>
<dbReference type="FunFam" id="3.30.930.10:FF:000020">
    <property type="entry name" value="Octanoyltransferase"/>
    <property type="match status" value="1"/>
</dbReference>
<dbReference type="Gene3D" id="3.30.930.10">
    <property type="entry name" value="Bira Bifunctional Protein, Domain 2"/>
    <property type="match status" value="1"/>
</dbReference>
<dbReference type="HAMAP" id="MF_00013">
    <property type="entry name" value="LipB"/>
    <property type="match status" value="1"/>
</dbReference>
<dbReference type="InterPro" id="IPR045864">
    <property type="entry name" value="aa-tRNA-synth_II/BPL/LPL"/>
</dbReference>
<dbReference type="InterPro" id="IPR004143">
    <property type="entry name" value="BPL_LPL_catalytic"/>
</dbReference>
<dbReference type="InterPro" id="IPR000544">
    <property type="entry name" value="Octanoyltransferase"/>
</dbReference>
<dbReference type="InterPro" id="IPR020605">
    <property type="entry name" value="Octanoyltransferase_CS"/>
</dbReference>
<dbReference type="NCBIfam" id="TIGR00214">
    <property type="entry name" value="lipB"/>
    <property type="match status" value="1"/>
</dbReference>
<dbReference type="NCBIfam" id="NF010922">
    <property type="entry name" value="PRK14342.1"/>
    <property type="match status" value="1"/>
</dbReference>
<dbReference type="PANTHER" id="PTHR10993:SF7">
    <property type="entry name" value="LIPOYLTRANSFERASE 2, MITOCHONDRIAL-RELATED"/>
    <property type="match status" value="1"/>
</dbReference>
<dbReference type="PANTHER" id="PTHR10993">
    <property type="entry name" value="OCTANOYLTRANSFERASE"/>
    <property type="match status" value="1"/>
</dbReference>
<dbReference type="Pfam" id="PF21948">
    <property type="entry name" value="LplA-B_cat"/>
    <property type="match status" value="1"/>
</dbReference>
<dbReference type="PIRSF" id="PIRSF016262">
    <property type="entry name" value="LPLase"/>
    <property type="match status" value="1"/>
</dbReference>
<dbReference type="SUPFAM" id="SSF55681">
    <property type="entry name" value="Class II aaRS and biotin synthetases"/>
    <property type="match status" value="1"/>
</dbReference>
<dbReference type="PROSITE" id="PS51733">
    <property type="entry name" value="BPL_LPL_CATALYTIC"/>
    <property type="match status" value="1"/>
</dbReference>
<dbReference type="PROSITE" id="PS01313">
    <property type="entry name" value="LIPB"/>
    <property type="match status" value="1"/>
</dbReference>
<keyword id="KW-0012">Acyltransferase</keyword>
<keyword id="KW-0963">Cytoplasm</keyword>
<keyword id="KW-1185">Reference proteome</keyword>
<keyword id="KW-0808">Transferase</keyword>
<proteinExistence type="inferred from homology"/>
<organism>
    <name type="scientific">Shewanella sediminis (strain HAW-EB3)</name>
    <dbReference type="NCBI Taxonomy" id="425104"/>
    <lineage>
        <taxon>Bacteria</taxon>
        <taxon>Pseudomonadati</taxon>
        <taxon>Pseudomonadota</taxon>
        <taxon>Gammaproteobacteria</taxon>
        <taxon>Alteromonadales</taxon>
        <taxon>Shewanellaceae</taxon>
        <taxon>Shewanella</taxon>
    </lineage>
</organism>
<feature type="chain" id="PRO_1000074017" description="Octanoyltransferase">
    <location>
        <begin position="1"/>
        <end position="219"/>
    </location>
</feature>
<feature type="domain" description="BPL/LPL catalytic" evidence="2">
    <location>
        <begin position="32"/>
        <end position="207"/>
    </location>
</feature>
<feature type="active site" description="Acyl-thioester intermediate" evidence="1">
    <location>
        <position position="169"/>
    </location>
</feature>
<feature type="binding site" evidence="1">
    <location>
        <begin position="71"/>
        <end position="78"/>
    </location>
    <ligand>
        <name>substrate</name>
    </ligand>
</feature>
<feature type="binding site" evidence="1">
    <location>
        <begin position="138"/>
        <end position="140"/>
    </location>
    <ligand>
        <name>substrate</name>
    </ligand>
</feature>
<feature type="binding site" evidence="1">
    <location>
        <begin position="151"/>
        <end position="153"/>
    </location>
    <ligand>
        <name>substrate</name>
    </ligand>
</feature>
<feature type="site" description="Lowers pKa of active site Cys" evidence="1">
    <location>
        <position position="135"/>
    </location>
</feature>
<comment type="function">
    <text evidence="1">Catalyzes the transfer of endogenously produced octanoic acid from octanoyl-acyl-carrier-protein onto the lipoyl domains of lipoate-dependent enzymes. Lipoyl-ACP can also act as a substrate although octanoyl-ACP is likely to be the physiological substrate.</text>
</comment>
<comment type="catalytic activity">
    <reaction evidence="1">
        <text>octanoyl-[ACP] + L-lysyl-[protein] = N(6)-octanoyl-L-lysyl-[protein] + holo-[ACP] + H(+)</text>
        <dbReference type="Rhea" id="RHEA:17665"/>
        <dbReference type="Rhea" id="RHEA-COMP:9636"/>
        <dbReference type="Rhea" id="RHEA-COMP:9685"/>
        <dbReference type="Rhea" id="RHEA-COMP:9752"/>
        <dbReference type="Rhea" id="RHEA-COMP:9928"/>
        <dbReference type="ChEBI" id="CHEBI:15378"/>
        <dbReference type="ChEBI" id="CHEBI:29969"/>
        <dbReference type="ChEBI" id="CHEBI:64479"/>
        <dbReference type="ChEBI" id="CHEBI:78463"/>
        <dbReference type="ChEBI" id="CHEBI:78809"/>
        <dbReference type="EC" id="2.3.1.181"/>
    </reaction>
</comment>
<comment type="pathway">
    <text evidence="1">Protein modification; protein lipoylation via endogenous pathway; protein N(6)-(lipoyl)lysine from octanoyl-[acyl-carrier-protein]: step 1/2.</text>
</comment>
<comment type="subcellular location">
    <subcellularLocation>
        <location evidence="1">Cytoplasm</location>
    </subcellularLocation>
</comment>
<comment type="miscellaneous">
    <text evidence="1">In the reaction, the free carboxyl group of octanoic acid is attached via an amide linkage to the epsilon-amino group of a specific lysine residue of lipoyl domains of lipoate-dependent enzymes.</text>
</comment>
<comment type="similarity">
    <text evidence="1">Belongs to the LipB family.</text>
</comment>
<sequence>MSESTLHVRYLGKQDYESVWHAMQDYTDNRDASSPDQLWIVEHPPVFTQGQAGKSEHILNPGDIPVIQVDRGGQVTYHGPGQLVAYPLINIKRLKIGVRQLVTDIENSIVQMLEGYQVKAYAKADAPGVYVDERKVASLGLRIRKGCSFHGLALNVDMDMSPFQRINPCGYAGLEMVQCKQLGGPQTVEEAGERLVKTFSHNLGYQNLIHHQGLSESYE</sequence>
<accession>A8FZ22</accession>
<protein>
    <recommendedName>
        <fullName evidence="1">Octanoyltransferase</fullName>
        <ecNumber evidence="1">2.3.1.181</ecNumber>
    </recommendedName>
    <alternativeName>
        <fullName evidence="1">Lipoate-protein ligase B</fullName>
    </alternativeName>
    <alternativeName>
        <fullName evidence="1">Lipoyl/octanoyl transferase</fullName>
    </alternativeName>
    <alternativeName>
        <fullName evidence="1">Octanoyl-[acyl-carrier-protein]-protein N-octanoyltransferase</fullName>
    </alternativeName>
</protein>
<reference key="1">
    <citation type="submission" date="2007-08" db="EMBL/GenBank/DDBJ databases">
        <title>Complete sequence of Shewanella sediminis HAW-EB3.</title>
        <authorList>
            <consortium name="US DOE Joint Genome Institute"/>
            <person name="Copeland A."/>
            <person name="Lucas S."/>
            <person name="Lapidus A."/>
            <person name="Barry K."/>
            <person name="Glavina del Rio T."/>
            <person name="Dalin E."/>
            <person name="Tice H."/>
            <person name="Pitluck S."/>
            <person name="Chertkov O."/>
            <person name="Brettin T."/>
            <person name="Bruce D."/>
            <person name="Detter J.C."/>
            <person name="Han C."/>
            <person name="Schmutz J."/>
            <person name="Larimer F."/>
            <person name="Land M."/>
            <person name="Hauser L."/>
            <person name="Kyrpides N."/>
            <person name="Kim E."/>
            <person name="Zhao J.-S."/>
            <person name="Richardson P."/>
        </authorList>
    </citation>
    <scope>NUCLEOTIDE SEQUENCE [LARGE SCALE GENOMIC DNA]</scope>
    <source>
        <strain>HAW-EB3</strain>
    </source>
</reference>
<gene>
    <name evidence="1" type="primary">lipB</name>
    <name type="ordered locus">Ssed_3491</name>
</gene>